<dbReference type="EC" id="7.6.2.-" evidence="1"/>
<dbReference type="EMBL" id="CP000109">
    <property type="protein sequence ID" value="ABB40776.1"/>
    <property type="molecule type" value="Genomic_DNA"/>
</dbReference>
<dbReference type="SMR" id="Q31J97"/>
<dbReference type="STRING" id="317025.Tcr_0180"/>
<dbReference type="KEGG" id="tcx:Tcr_0180"/>
<dbReference type="eggNOG" id="COG4559">
    <property type="taxonomic scope" value="Bacteria"/>
</dbReference>
<dbReference type="HOGENOM" id="CLU_000604_1_11_6"/>
<dbReference type="OrthoDB" id="6461291at2"/>
<dbReference type="GO" id="GO:0005886">
    <property type="term" value="C:plasma membrane"/>
    <property type="evidence" value="ECO:0007669"/>
    <property type="project" value="UniProtKB-SubCell"/>
</dbReference>
<dbReference type="GO" id="GO:0005524">
    <property type="term" value="F:ATP binding"/>
    <property type="evidence" value="ECO:0007669"/>
    <property type="project" value="UniProtKB-KW"/>
</dbReference>
<dbReference type="GO" id="GO:0016887">
    <property type="term" value="F:ATP hydrolysis activity"/>
    <property type="evidence" value="ECO:0007669"/>
    <property type="project" value="InterPro"/>
</dbReference>
<dbReference type="CDD" id="cd03214">
    <property type="entry name" value="ABC_Iron-Siderophores_B12_Hemin"/>
    <property type="match status" value="1"/>
</dbReference>
<dbReference type="Gene3D" id="3.40.50.300">
    <property type="entry name" value="P-loop containing nucleotide triphosphate hydrolases"/>
    <property type="match status" value="1"/>
</dbReference>
<dbReference type="InterPro" id="IPR003593">
    <property type="entry name" value="AAA+_ATPase"/>
</dbReference>
<dbReference type="InterPro" id="IPR003439">
    <property type="entry name" value="ABC_transporter-like_ATP-bd"/>
</dbReference>
<dbReference type="InterPro" id="IPR017871">
    <property type="entry name" value="ABC_transporter-like_CS"/>
</dbReference>
<dbReference type="InterPro" id="IPR027417">
    <property type="entry name" value="P-loop_NTPase"/>
</dbReference>
<dbReference type="NCBIfam" id="NF010068">
    <property type="entry name" value="PRK13548.1"/>
    <property type="match status" value="1"/>
</dbReference>
<dbReference type="PANTHER" id="PTHR42794">
    <property type="entry name" value="HEMIN IMPORT ATP-BINDING PROTEIN HMUV"/>
    <property type="match status" value="1"/>
</dbReference>
<dbReference type="PANTHER" id="PTHR42794:SF1">
    <property type="entry name" value="HEMIN IMPORT ATP-BINDING PROTEIN HMUV"/>
    <property type="match status" value="1"/>
</dbReference>
<dbReference type="Pfam" id="PF00005">
    <property type="entry name" value="ABC_tran"/>
    <property type="match status" value="1"/>
</dbReference>
<dbReference type="SMART" id="SM00382">
    <property type="entry name" value="AAA"/>
    <property type="match status" value="1"/>
</dbReference>
<dbReference type="SUPFAM" id="SSF52540">
    <property type="entry name" value="P-loop containing nucleoside triphosphate hydrolases"/>
    <property type="match status" value="1"/>
</dbReference>
<dbReference type="PROSITE" id="PS00211">
    <property type="entry name" value="ABC_TRANSPORTER_1"/>
    <property type="match status" value="1"/>
</dbReference>
<dbReference type="PROSITE" id="PS50893">
    <property type="entry name" value="ABC_TRANSPORTER_2"/>
    <property type="match status" value="1"/>
</dbReference>
<dbReference type="PROSITE" id="PS51261">
    <property type="entry name" value="HMUV"/>
    <property type="match status" value="1"/>
</dbReference>
<sequence length="258" mass="28473">MLTAEKLCVERQGHRILSDVSVEISPGQVVAVLGANGAGKSTLLQCLSGDVSEAKQHVFLNGKNLDSYTSQALAMARAVMPQSVQMDFAFLVSELVEMGLWQIPRQSDKQQRVDEALALFGIETLKQRDYQTLSGGEQQRVQLARVVAQLLTPIAQADAPRYLLLDECTANLDFAHQHQVFEVVKKLANTYQMGVVVVLHDMNLAAQYADHLVLLKQGKVLDQGSVESMLIPSKIEELYDFPVQVLPHPKGWPMIVPA</sequence>
<accession>Q31J97</accession>
<proteinExistence type="inferred from homology"/>
<gene>
    <name evidence="1" type="primary">hmuV</name>
    <name type="ordered locus">Tcr_0180</name>
</gene>
<reference key="1">
    <citation type="journal article" date="2006" name="PLoS Biol.">
        <title>The genome of deep-sea vent chemolithoautotroph Thiomicrospira crunogena XCL-2.</title>
        <authorList>
            <person name="Scott K.M."/>
            <person name="Sievert S.M."/>
            <person name="Abril F.N."/>
            <person name="Ball L.A."/>
            <person name="Barrett C.J."/>
            <person name="Blake R.A."/>
            <person name="Boller A.J."/>
            <person name="Chain P.S.G."/>
            <person name="Clark J.A."/>
            <person name="Davis C.R."/>
            <person name="Detter C."/>
            <person name="Do K.F."/>
            <person name="Dobrinski K.P."/>
            <person name="Faza B.I."/>
            <person name="Fitzpatrick K.A."/>
            <person name="Freyermuth S.K."/>
            <person name="Harmer T.L."/>
            <person name="Hauser L.J."/>
            <person name="Huegler M."/>
            <person name="Kerfeld C.A."/>
            <person name="Klotz M.G."/>
            <person name="Kong W.W."/>
            <person name="Land M."/>
            <person name="Lapidus A."/>
            <person name="Larimer F.W."/>
            <person name="Longo D.L."/>
            <person name="Lucas S."/>
            <person name="Malfatti S.A."/>
            <person name="Massey S.E."/>
            <person name="Martin D.D."/>
            <person name="McCuddin Z."/>
            <person name="Meyer F."/>
            <person name="Moore J.L."/>
            <person name="Ocampo L.H. Jr."/>
            <person name="Paul J.H."/>
            <person name="Paulsen I.T."/>
            <person name="Reep D.K."/>
            <person name="Ren Q."/>
            <person name="Ross R.L."/>
            <person name="Sato P.Y."/>
            <person name="Thomas P."/>
            <person name="Tinkham L.E."/>
            <person name="Zeruth G.T."/>
        </authorList>
    </citation>
    <scope>NUCLEOTIDE SEQUENCE [LARGE SCALE GENOMIC DNA]</scope>
    <source>
        <strain>DSM 25203 / XCL-2</strain>
    </source>
</reference>
<evidence type="ECO:0000255" key="1">
    <source>
        <dbReference type="HAMAP-Rule" id="MF_01718"/>
    </source>
</evidence>
<keyword id="KW-0067">ATP-binding</keyword>
<keyword id="KW-0997">Cell inner membrane</keyword>
<keyword id="KW-1003">Cell membrane</keyword>
<keyword id="KW-0472">Membrane</keyword>
<keyword id="KW-0547">Nucleotide-binding</keyword>
<keyword id="KW-1278">Translocase</keyword>
<keyword id="KW-0813">Transport</keyword>
<protein>
    <recommendedName>
        <fullName evidence="1">Hemin import ATP-binding protein HmuV</fullName>
        <ecNumber evidence="1">7.6.2.-</ecNumber>
    </recommendedName>
</protein>
<name>HMUV_HYDCU</name>
<comment type="function">
    <text evidence="1">Part of the ABC transporter complex HmuTUV involved in hemin import. Responsible for energy coupling to the transport system.</text>
</comment>
<comment type="subunit">
    <text evidence="1">The complex is composed of two ATP-binding proteins (HmuV), two transmembrane proteins (HmuU) and a solute-binding protein (HmuT).</text>
</comment>
<comment type="subcellular location">
    <subcellularLocation>
        <location evidence="1">Cell inner membrane</location>
        <topology evidence="1">Peripheral membrane protein</topology>
    </subcellularLocation>
</comment>
<comment type="similarity">
    <text evidence="1">Belongs to the ABC transporter superfamily. Heme (hemin) importer (TC 3.A.1.14.5) family.</text>
</comment>
<feature type="chain" id="PRO_0000269633" description="Hemin import ATP-binding protein HmuV">
    <location>
        <begin position="1"/>
        <end position="258"/>
    </location>
</feature>
<feature type="domain" description="ABC transporter" evidence="1">
    <location>
        <begin position="2"/>
        <end position="242"/>
    </location>
</feature>
<feature type="binding site" evidence="1">
    <location>
        <begin position="34"/>
        <end position="41"/>
    </location>
    <ligand>
        <name>ATP</name>
        <dbReference type="ChEBI" id="CHEBI:30616"/>
    </ligand>
</feature>
<organism>
    <name type="scientific">Hydrogenovibrio crunogenus (strain DSM 25203 / XCL-2)</name>
    <name type="common">Thiomicrospira crunogena</name>
    <dbReference type="NCBI Taxonomy" id="317025"/>
    <lineage>
        <taxon>Bacteria</taxon>
        <taxon>Pseudomonadati</taxon>
        <taxon>Pseudomonadota</taxon>
        <taxon>Gammaproteobacteria</taxon>
        <taxon>Thiotrichales</taxon>
        <taxon>Piscirickettsiaceae</taxon>
        <taxon>Hydrogenovibrio</taxon>
    </lineage>
</organism>